<name>RL24_METMA</name>
<comment type="function">
    <text evidence="1">One of two assembly initiator proteins, it binds directly to the 5'-end of the 23S rRNA, where it nucleates assembly of the 50S subunit.</text>
</comment>
<comment type="function">
    <text evidence="1">Located at the polypeptide exit tunnel on the outside of the subunit.</text>
</comment>
<comment type="subunit">
    <text evidence="1">Part of the 50S ribosomal subunit.</text>
</comment>
<comment type="similarity">
    <text evidence="1">Belongs to the universal ribosomal protein uL24 family.</text>
</comment>
<gene>
    <name evidence="1" type="primary">rpl24</name>
    <name type="ordered locus">MM_2135</name>
</gene>
<protein>
    <recommendedName>
        <fullName evidence="1">Large ribosomal subunit protein uL24</fullName>
    </recommendedName>
    <alternativeName>
        <fullName evidence="2">50S ribosomal protein L24</fullName>
    </alternativeName>
</protein>
<organism>
    <name type="scientific">Methanosarcina mazei (strain ATCC BAA-159 / DSM 3647 / Goe1 / Go1 / JCM 11833 / OCM 88)</name>
    <name type="common">Methanosarcina frisia</name>
    <dbReference type="NCBI Taxonomy" id="192952"/>
    <lineage>
        <taxon>Archaea</taxon>
        <taxon>Methanobacteriati</taxon>
        <taxon>Methanobacteriota</taxon>
        <taxon>Stenosarchaea group</taxon>
        <taxon>Methanomicrobia</taxon>
        <taxon>Methanosarcinales</taxon>
        <taxon>Methanosarcinaceae</taxon>
        <taxon>Methanosarcina</taxon>
    </lineage>
</organism>
<keyword id="KW-0687">Ribonucleoprotein</keyword>
<keyword id="KW-0689">Ribosomal protein</keyword>
<keyword id="KW-0694">RNA-binding</keyword>
<keyword id="KW-0699">rRNA-binding</keyword>
<feature type="chain" id="PRO_0000130772" description="Large ribosomal subunit protein uL24">
    <location>
        <begin position="1"/>
        <end position="122"/>
    </location>
</feature>
<sequence>MSEVIEMVSKQPRKQRKARYTAPLHIRQKFMGARLSEALAKQYGTRSAAVITGDTVKIMRGDFKGTEGKVQSVSLMDGTIAVDGVISTKVDGTEVPRPINPSNVMITKLEMKDGRRASSIKK</sequence>
<dbReference type="EMBL" id="AE008384">
    <property type="protein sequence ID" value="AAM31831.1"/>
    <property type="molecule type" value="Genomic_DNA"/>
</dbReference>
<dbReference type="SMR" id="Q8PV39"/>
<dbReference type="KEGG" id="mma:MM_2135"/>
<dbReference type="PATRIC" id="fig|192952.21.peg.2449"/>
<dbReference type="eggNOG" id="arCOG04094">
    <property type="taxonomic scope" value="Archaea"/>
</dbReference>
<dbReference type="HOGENOM" id="CLU_093240_2_1_2"/>
<dbReference type="Proteomes" id="UP000000595">
    <property type="component" value="Chromosome"/>
</dbReference>
<dbReference type="GO" id="GO:0015934">
    <property type="term" value="C:large ribosomal subunit"/>
    <property type="evidence" value="ECO:0007669"/>
    <property type="project" value="InterPro"/>
</dbReference>
<dbReference type="GO" id="GO:0019843">
    <property type="term" value="F:rRNA binding"/>
    <property type="evidence" value="ECO:0007669"/>
    <property type="project" value="UniProtKB-UniRule"/>
</dbReference>
<dbReference type="GO" id="GO:0003735">
    <property type="term" value="F:structural constituent of ribosome"/>
    <property type="evidence" value="ECO:0007669"/>
    <property type="project" value="InterPro"/>
</dbReference>
<dbReference type="GO" id="GO:0006412">
    <property type="term" value="P:translation"/>
    <property type="evidence" value="ECO:0007669"/>
    <property type="project" value="UniProtKB-UniRule"/>
</dbReference>
<dbReference type="CDD" id="cd06089">
    <property type="entry name" value="KOW_RPL26"/>
    <property type="match status" value="1"/>
</dbReference>
<dbReference type="FunFam" id="2.30.30.30:FF:000009">
    <property type="entry name" value="60S ribosomal protein L26"/>
    <property type="match status" value="1"/>
</dbReference>
<dbReference type="Gene3D" id="2.30.30.30">
    <property type="match status" value="1"/>
</dbReference>
<dbReference type="HAMAP" id="MF_01326_A">
    <property type="entry name" value="Ribosomal_uL24_A"/>
    <property type="match status" value="1"/>
</dbReference>
<dbReference type="InterPro" id="IPR005824">
    <property type="entry name" value="KOW"/>
</dbReference>
<dbReference type="InterPro" id="IPR014722">
    <property type="entry name" value="Rib_uL2_dom2"/>
</dbReference>
<dbReference type="InterPro" id="IPR005825">
    <property type="entry name" value="Ribosomal_uL24_CS"/>
</dbReference>
<dbReference type="InterPro" id="IPR005756">
    <property type="entry name" value="Ribosomal_uL24_euk/arc"/>
</dbReference>
<dbReference type="InterPro" id="IPR041988">
    <property type="entry name" value="Ribosomal_uL24_KOW"/>
</dbReference>
<dbReference type="InterPro" id="IPR008991">
    <property type="entry name" value="Translation_prot_SH3-like_sf"/>
</dbReference>
<dbReference type="NCBIfam" id="TIGR01080">
    <property type="entry name" value="rplX_A_E"/>
    <property type="match status" value="1"/>
</dbReference>
<dbReference type="PANTHER" id="PTHR11143">
    <property type="entry name" value="60S RIBOSOMAL PROTEIN L26 FAMILY MEMBER"/>
    <property type="match status" value="1"/>
</dbReference>
<dbReference type="Pfam" id="PF00467">
    <property type="entry name" value="KOW"/>
    <property type="match status" value="1"/>
</dbReference>
<dbReference type="Pfam" id="PF16906">
    <property type="entry name" value="Ribosomal_L26"/>
    <property type="match status" value="1"/>
</dbReference>
<dbReference type="SUPFAM" id="SSF50104">
    <property type="entry name" value="Translation proteins SH3-like domain"/>
    <property type="match status" value="1"/>
</dbReference>
<dbReference type="PROSITE" id="PS01108">
    <property type="entry name" value="RIBOSOMAL_L24"/>
    <property type="match status" value="1"/>
</dbReference>
<reference key="1">
    <citation type="journal article" date="2002" name="J. Mol. Microbiol. Biotechnol.">
        <title>The genome of Methanosarcina mazei: evidence for lateral gene transfer between Bacteria and Archaea.</title>
        <authorList>
            <person name="Deppenmeier U."/>
            <person name="Johann A."/>
            <person name="Hartsch T."/>
            <person name="Merkl R."/>
            <person name="Schmitz R.A."/>
            <person name="Martinez-Arias R."/>
            <person name="Henne A."/>
            <person name="Wiezer A."/>
            <person name="Baeumer S."/>
            <person name="Jacobi C."/>
            <person name="Brueggemann H."/>
            <person name="Lienard T."/>
            <person name="Christmann A."/>
            <person name="Boemecke M."/>
            <person name="Steckel S."/>
            <person name="Bhattacharyya A."/>
            <person name="Lykidis A."/>
            <person name="Overbeek R."/>
            <person name="Klenk H.-P."/>
            <person name="Gunsalus R.P."/>
            <person name="Fritz H.-J."/>
            <person name="Gottschalk G."/>
        </authorList>
    </citation>
    <scope>NUCLEOTIDE SEQUENCE [LARGE SCALE GENOMIC DNA]</scope>
    <source>
        <strain>ATCC BAA-159 / DSM 3647 / Goe1 / Go1 / JCM 11833 / OCM 88</strain>
    </source>
</reference>
<accession>Q8PV39</accession>
<evidence type="ECO:0000255" key="1">
    <source>
        <dbReference type="HAMAP-Rule" id="MF_01326"/>
    </source>
</evidence>
<evidence type="ECO:0000305" key="2"/>
<proteinExistence type="inferred from homology"/>